<accession>P67720</accession>
<accession>Q99RY4</accession>
<name>URE3_STAAW</name>
<sequence>MHFTQREQDKLMIVVAAEVARRRKARGLKLNHPEALALISDELLEGARDGKTVAELMSYGRQILNKEDVMDGVEHMITDIEIEATFPDGTKLITVHHPIV</sequence>
<dbReference type="EC" id="3.5.1.5" evidence="1"/>
<dbReference type="EMBL" id="BA000033">
    <property type="protein sequence ID" value="BAB96071.1"/>
    <property type="molecule type" value="Genomic_DNA"/>
</dbReference>
<dbReference type="RefSeq" id="WP_000545928.1">
    <property type="nucleotide sequence ID" value="NC_003923.1"/>
</dbReference>
<dbReference type="SMR" id="P67720"/>
<dbReference type="KEGG" id="sam:MW2206"/>
<dbReference type="HOGENOM" id="CLU_145825_1_0_9"/>
<dbReference type="UniPathway" id="UPA00258">
    <property type="reaction ID" value="UER00370"/>
</dbReference>
<dbReference type="GO" id="GO:0005737">
    <property type="term" value="C:cytoplasm"/>
    <property type="evidence" value="ECO:0007669"/>
    <property type="project" value="UniProtKB-SubCell"/>
</dbReference>
<dbReference type="GO" id="GO:0016151">
    <property type="term" value="F:nickel cation binding"/>
    <property type="evidence" value="ECO:0007669"/>
    <property type="project" value="InterPro"/>
</dbReference>
<dbReference type="GO" id="GO:0009039">
    <property type="term" value="F:urease activity"/>
    <property type="evidence" value="ECO:0007669"/>
    <property type="project" value="UniProtKB-UniRule"/>
</dbReference>
<dbReference type="GO" id="GO:0043419">
    <property type="term" value="P:urea catabolic process"/>
    <property type="evidence" value="ECO:0007669"/>
    <property type="project" value="UniProtKB-UniRule"/>
</dbReference>
<dbReference type="CDD" id="cd00390">
    <property type="entry name" value="Urease_gamma"/>
    <property type="match status" value="1"/>
</dbReference>
<dbReference type="Gene3D" id="3.30.280.10">
    <property type="entry name" value="Urease, gamma-like subunit"/>
    <property type="match status" value="1"/>
</dbReference>
<dbReference type="HAMAP" id="MF_00739">
    <property type="entry name" value="Urease_gamma"/>
    <property type="match status" value="1"/>
</dbReference>
<dbReference type="InterPro" id="IPR012010">
    <property type="entry name" value="Urease_gamma"/>
</dbReference>
<dbReference type="InterPro" id="IPR002026">
    <property type="entry name" value="Urease_gamma/gamma-beta_su"/>
</dbReference>
<dbReference type="InterPro" id="IPR036463">
    <property type="entry name" value="Urease_gamma_sf"/>
</dbReference>
<dbReference type="InterPro" id="IPR050069">
    <property type="entry name" value="Urease_subunit"/>
</dbReference>
<dbReference type="NCBIfam" id="NF009712">
    <property type="entry name" value="PRK13241.1"/>
    <property type="match status" value="1"/>
</dbReference>
<dbReference type="NCBIfam" id="TIGR00193">
    <property type="entry name" value="urease_gam"/>
    <property type="match status" value="1"/>
</dbReference>
<dbReference type="PANTHER" id="PTHR33569">
    <property type="entry name" value="UREASE"/>
    <property type="match status" value="1"/>
</dbReference>
<dbReference type="PANTHER" id="PTHR33569:SF1">
    <property type="entry name" value="UREASE"/>
    <property type="match status" value="1"/>
</dbReference>
<dbReference type="Pfam" id="PF00547">
    <property type="entry name" value="Urease_gamma"/>
    <property type="match status" value="1"/>
</dbReference>
<dbReference type="PIRSF" id="PIRSF001223">
    <property type="entry name" value="Urease_gamma"/>
    <property type="match status" value="1"/>
</dbReference>
<dbReference type="SUPFAM" id="SSF54111">
    <property type="entry name" value="Urease, gamma-subunit"/>
    <property type="match status" value="1"/>
</dbReference>
<keyword id="KW-0963">Cytoplasm</keyword>
<keyword id="KW-0378">Hydrolase</keyword>
<gene>
    <name evidence="1" type="primary">ureA</name>
    <name type="ordered locus">MW2206</name>
</gene>
<proteinExistence type="inferred from homology"/>
<protein>
    <recommendedName>
        <fullName evidence="1">Urease subunit gamma</fullName>
        <ecNumber evidence="1">3.5.1.5</ecNumber>
    </recommendedName>
    <alternativeName>
        <fullName evidence="1">Urea amidohydrolase subunit gamma</fullName>
    </alternativeName>
</protein>
<evidence type="ECO:0000255" key="1">
    <source>
        <dbReference type="HAMAP-Rule" id="MF_00739"/>
    </source>
</evidence>
<feature type="chain" id="PRO_0000098043" description="Urease subunit gamma">
    <location>
        <begin position="1"/>
        <end position="100"/>
    </location>
</feature>
<organism>
    <name type="scientific">Staphylococcus aureus (strain MW2)</name>
    <dbReference type="NCBI Taxonomy" id="196620"/>
    <lineage>
        <taxon>Bacteria</taxon>
        <taxon>Bacillati</taxon>
        <taxon>Bacillota</taxon>
        <taxon>Bacilli</taxon>
        <taxon>Bacillales</taxon>
        <taxon>Staphylococcaceae</taxon>
        <taxon>Staphylococcus</taxon>
    </lineage>
</organism>
<reference key="1">
    <citation type="journal article" date="2002" name="Lancet">
        <title>Genome and virulence determinants of high virulence community-acquired MRSA.</title>
        <authorList>
            <person name="Baba T."/>
            <person name="Takeuchi F."/>
            <person name="Kuroda M."/>
            <person name="Yuzawa H."/>
            <person name="Aoki K."/>
            <person name="Oguchi A."/>
            <person name="Nagai Y."/>
            <person name="Iwama N."/>
            <person name="Asano K."/>
            <person name="Naimi T."/>
            <person name="Kuroda H."/>
            <person name="Cui L."/>
            <person name="Yamamoto K."/>
            <person name="Hiramatsu K."/>
        </authorList>
    </citation>
    <scope>NUCLEOTIDE SEQUENCE [LARGE SCALE GENOMIC DNA]</scope>
    <source>
        <strain>MW2</strain>
    </source>
</reference>
<comment type="catalytic activity">
    <reaction evidence="1">
        <text>urea + 2 H2O + H(+) = hydrogencarbonate + 2 NH4(+)</text>
        <dbReference type="Rhea" id="RHEA:20557"/>
        <dbReference type="ChEBI" id="CHEBI:15377"/>
        <dbReference type="ChEBI" id="CHEBI:15378"/>
        <dbReference type="ChEBI" id="CHEBI:16199"/>
        <dbReference type="ChEBI" id="CHEBI:17544"/>
        <dbReference type="ChEBI" id="CHEBI:28938"/>
        <dbReference type="EC" id="3.5.1.5"/>
    </reaction>
</comment>
<comment type="pathway">
    <text evidence="1">Nitrogen metabolism; urea degradation; CO(2) and NH(3) from urea (urease route): step 1/1.</text>
</comment>
<comment type="subunit">
    <text evidence="1">Heterotrimer of UreA (gamma), UreB (beta) and UreC (alpha) subunits. Three heterotrimers associate to form the active enzyme.</text>
</comment>
<comment type="subcellular location">
    <subcellularLocation>
        <location evidence="1">Cytoplasm</location>
    </subcellularLocation>
</comment>
<comment type="similarity">
    <text evidence="1">Belongs to the urease gamma subunit family.</text>
</comment>